<proteinExistence type="evidence at protein level"/>
<feature type="signal peptide" evidence="3">
    <location>
        <begin position="1"/>
        <end position="29"/>
    </location>
</feature>
<feature type="chain" id="PRO_0000007031" description="Defensin-like protein 16">
    <location>
        <begin position="30"/>
        <end position="80"/>
    </location>
</feature>
<feature type="modified residue" description="Pyrrolidone carboxylic acid" evidence="2">
    <location>
        <position position="30"/>
    </location>
</feature>
<feature type="disulfide bond" evidence="1">
    <location>
        <begin position="33"/>
        <end position="80"/>
    </location>
</feature>
<feature type="disulfide bond" evidence="1">
    <location>
        <begin position="44"/>
        <end position="65"/>
    </location>
</feature>
<feature type="disulfide bond" evidence="1">
    <location>
        <begin position="50"/>
        <end position="74"/>
    </location>
</feature>
<feature type="disulfide bond" evidence="1">
    <location>
        <begin position="54"/>
        <end position="76"/>
    </location>
</feature>
<protein>
    <recommendedName>
        <fullName>Defensin-like protein 16</fullName>
    </recommendedName>
    <alternativeName>
        <fullName>Low-molecular-weight cysteine-rich protein 77</fullName>
        <shortName>Protein LCR77</shortName>
    </alternativeName>
    <alternativeName>
        <fullName>Plant defensin 1.2</fullName>
    </alternativeName>
    <alternativeName>
        <fullName>Plant defensin 1.2a</fullName>
    </alternativeName>
</protein>
<reference key="1">
    <citation type="journal article" date="1996" name="Plant Cell">
        <title>Pathogen-induced systemic activation of a plant defensin gene in Arabidopsis follows a salicylic acid-independent pathway.</title>
        <authorList>
            <person name="Penninckx I.A.M.A."/>
            <person name="Eggermont K."/>
            <person name="Terras F.R.G."/>
            <person name="Thomma B.P.H.J."/>
            <person name="De Samblanx G.W."/>
            <person name="Buchala A."/>
            <person name="Metraux J.-P."/>
            <person name="Manners J.M."/>
            <person name="Broekaert W.F."/>
        </authorList>
    </citation>
    <scope>NUCLEOTIDE SEQUENCE [MRNA]</scope>
    <scope>FUNCTION</scope>
    <scope>TISSUE SPECIFICITY</scope>
    <scope>INDUCTION</scope>
</reference>
<reference key="2">
    <citation type="journal article" date="1999" name="DNA Res.">
        <title>Structural analysis of Arabidopsis thaliana chromosome 5. IX. Sequence features of the regions of 1,011,550 bp covered by seventeen P1 and TAC clones.</title>
        <authorList>
            <person name="Kaneko T."/>
            <person name="Katoh T."/>
            <person name="Sato S."/>
            <person name="Nakamura Y."/>
            <person name="Asamizu E."/>
            <person name="Kotani H."/>
            <person name="Miyajima N."/>
            <person name="Tabata S."/>
        </authorList>
    </citation>
    <scope>NUCLEOTIDE SEQUENCE [LARGE SCALE GENOMIC DNA]</scope>
    <source>
        <strain>cv. Columbia</strain>
    </source>
</reference>
<reference key="3">
    <citation type="journal article" date="2017" name="Plant J.">
        <title>Araport11: a complete reannotation of the Arabidopsis thaliana reference genome.</title>
        <authorList>
            <person name="Cheng C.Y."/>
            <person name="Krishnakumar V."/>
            <person name="Chan A.P."/>
            <person name="Thibaud-Nissen F."/>
            <person name="Schobel S."/>
            <person name="Town C.D."/>
        </authorList>
    </citation>
    <scope>GENOME REANNOTATION</scope>
    <source>
        <strain>cv. Columbia</strain>
    </source>
</reference>
<reference key="4">
    <citation type="journal article" date="2003" name="Science">
        <title>Empirical analysis of transcriptional activity in the Arabidopsis genome.</title>
        <authorList>
            <person name="Yamada K."/>
            <person name="Lim J."/>
            <person name="Dale J.M."/>
            <person name="Chen H."/>
            <person name="Shinn P."/>
            <person name="Palm C.J."/>
            <person name="Southwick A.M."/>
            <person name="Wu H.C."/>
            <person name="Kim C.J."/>
            <person name="Nguyen M."/>
            <person name="Pham P.K."/>
            <person name="Cheuk R.F."/>
            <person name="Karlin-Newmann G."/>
            <person name="Liu S.X."/>
            <person name="Lam B."/>
            <person name="Sakano H."/>
            <person name="Wu T."/>
            <person name="Yu G."/>
            <person name="Miranda M."/>
            <person name="Quach H.L."/>
            <person name="Tripp M."/>
            <person name="Chang C.H."/>
            <person name="Lee J.M."/>
            <person name="Toriumi M.J."/>
            <person name="Chan M.M."/>
            <person name="Tang C.C."/>
            <person name="Onodera C.S."/>
            <person name="Deng J.M."/>
            <person name="Akiyama K."/>
            <person name="Ansari Y."/>
            <person name="Arakawa T."/>
            <person name="Banh J."/>
            <person name="Banno F."/>
            <person name="Bowser L."/>
            <person name="Brooks S.Y."/>
            <person name="Carninci P."/>
            <person name="Chao Q."/>
            <person name="Choy N."/>
            <person name="Enju A."/>
            <person name="Goldsmith A.D."/>
            <person name="Gurjal M."/>
            <person name="Hansen N.F."/>
            <person name="Hayashizaki Y."/>
            <person name="Johnson-Hopson C."/>
            <person name="Hsuan V.W."/>
            <person name="Iida K."/>
            <person name="Karnes M."/>
            <person name="Khan S."/>
            <person name="Koesema E."/>
            <person name="Ishida J."/>
            <person name="Jiang P.X."/>
            <person name="Jones T."/>
            <person name="Kawai J."/>
            <person name="Kamiya A."/>
            <person name="Meyers C."/>
            <person name="Nakajima M."/>
            <person name="Narusaka M."/>
            <person name="Seki M."/>
            <person name="Sakurai T."/>
            <person name="Satou M."/>
            <person name="Tamse R."/>
            <person name="Vaysberg M."/>
            <person name="Wallender E.K."/>
            <person name="Wong C."/>
            <person name="Yamamura Y."/>
            <person name="Yuan S."/>
            <person name="Shinozaki K."/>
            <person name="Davis R.W."/>
            <person name="Theologis A."/>
            <person name="Ecker J.R."/>
        </authorList>
    </citation>
    <scope>NUCLEOTIDE SEQUENCE [LARGE SCALE MRNA]</scope>
    <source>
        <strain>cv. Columbia</strain>
    </source>
</reference>
<reference key="5">
    <citation type="journal article" date="1997" name="FEBS Lett.">
        <title>ESTs reveal a multigene family for plant defensins in Arabidopsis thaliana.</title>
        <authorList>
            <person name="Epple P."/>
            <person name="Apel K."/>
            <person name="Bohlmann H."/>
        </authorList>
    </citation>
    <scope>TISSUE SPECIFICITY</scope>
</reference>
<reference key="6">
    <citation type="journal article" date="1998" name="Plant Cell">
        <title>Concomitant activation of jasmonate and ethylene response pathways is required for induction of a plant defensin gene in Arabidopsis.</title>
        <authorList>
            <person name="Penninckx I.A.M.A."/>
            <person name="Thomma B.P.H.J."/>
            <person name="Buchala A."/>
            <person name="Metraux J.-P."/>
            <person name="Broekaert W.F."/>
        </authorList>
    </citation>
    <scope>INDUCTION</scope>
</reference>
<reference key="7">
    <citation type="journal article" date="2001" name="Plant Mol. Biol.">
        <title>Two large Arabidopsis thaliana gene families are homologous to the Brassica gene superfamily that encodes pollen coat proteins and the male component of the self-incompatibility response.</title>
        <authorList>
            <person name="Vanoosthuyse V."/>
            <person name="Miege C."/>
            <person name="Dumas C."/>
            <person name="Cock J.M."/>
        </authorList>
    </citation>
    <scope>IDENTIFICATION</scope>
</reference>
<reference key="8">
    <citation type="journal article" date="2002" name="Planta">
        <title>Plant defensins.</title>
        <authorList>
            <person name="Thomma B.P.H.J."/>
            <person name="Cammue B.P."/>
            <person name="Thevissen K."/>
        </authorList>
    </citation>
    <scope>GENE FAMILY</scope>
    <scope>NOMENCLATURE</scope>
</reference>
<reference key="9">
    <citation type="journal article" date="2005" name="Plant Physiol.">
        <title>Genome organization of more than 300 defensin-like genes in Arabidopsis.</title>
        <authorList>
            <person name="Silverstein K.A.T."/>
            <person name="Graham M.A."/>
            <person name="Paape T.D."/>
            <person name="VandenBosch K.A."/>
        </authorList>
    </citation>
    <scope>GENE FAMILY</scope>
</reference>
<reference key="10">
    <citation type="journal article" date="2008" name="Plant Physiol.">
        <title>The AP2/ERF domain transcription factor ORA59 integrates jasmonic acid and ethylene signals in plant defense.</title>
        <authorList>
            <person name="Pre M."/>
            <person name="Atallah M."/>
            <person name="Champion A."/>
            <person name="De Vos M."/>
            <person name="Pieterse C.M.J."/>
            <person name="Memelink J."/>
        </authorList>
    </citation>
    <scope>INDUCTION</scope>
</reference>
<sequence>MAKFASIITLIFAALVLFAAFDAPAMVEAQKLCEKPSGTWSGVCGNSNACKNQCINLEGAKHGSCNYVFPAHKCICYVPC</sequence>
<accession>Q9FI23</accession>
<accession>P82786</accession>
<keyword id="KW-0929">Antimicrobial</keyword>
<keyword id="KW-1015">Disulfide bond</keyword>
<keyword id="KW-0295">Fungicide</keyword>
<keyword id="KW-0611">Plant defense</keyword>
<keyword id="KW-0873">Pyrrolidone carboxylic acid</keyword>
<keyword id="KW-1185">Reference proteome</keyword>
<keyword id="KW-0964">Secreted</keyword>
<keyword id="KW-0732">Signal</keyword>
<evidence type="ECO:0000250" key="1"/>
<evidence type="ECO:0000250" key="2">
    <source>
        <dbReference type="UniProtKB" id="P30224"/>
    </source>
</evidence>
<evidence type="ECO:0000255" key="3"/>
<evidence type="ECO:0000269" key="4">
    <source>
    </source>
</evidence>
<evidence type="ECO:0000269" key="5">
    <source>
    </source>
</evidence>
<evidence type="ECO:0000269" key="6">
    <source>
    </source>
</evidence>
<evidence type="ECO:0000269" key="7">
    <source>
    </source>
</evidence>
<evidence type="ECO:0000305" key="8"/>
<organism>
    <name type="scientific">Arabidopsis thaliana</name>
    <name type="common">Mouse-ear cress</name>
    <dbReference type="NCBI Taxonomy" id="3702"/>
    <lineage>
        <taxon>Eukaryota</taxon>
        <taxon>Viridiplantae</taxon>
        <taxon>Streptophyta</taxon>
        <taxon>Embryophyta</taxon>
        <taxon>Tracheophyta</taxon>
        <taxon>Spermatophyta</taxon>
        <taxon>Magnoliopsida</taxon>
        <taxon>eudicotyledons</taxon>
        <taxon>Gunneridae</taxon>
        <taxon>Pentapetalae</taxon>
        <taxon>rosids</taxon>
        <taxon>malvids</taxon>
        <taxon>Brassicales</taxon>
        <taxon>Brassicaceae</taxon>
        <taxon>Camelineae</taxon>
        <taxon>Arabidopsis</taxon>
    </lineage>
</organism>
<name>DEF16_ARATH</name>
<dbReference type="EMBL" id="AB017065">
    <property type="protein sequence ID" value="BAB09149.1"/>
    <property type="molecule type" value="Genomic_DNA"/>
</dbReference>
<dbReference type="EMBL" id="CP002688">
    <property type="protein sequence ID" value="AED95107.1"/>
    <property type="molecule type" value="Genomic_DNA"/>
</dbReference>
<dbReference type="EMBL" id="AY063779">
    <property type="protein sequence ID" value="AAL36086.1"/>
    <property type="molecule type" value="mRNA"/>
</dbReference>
<dbReference type="EMBL" id="AY133787">
    <property type="protein sequence ID" value="AAM91721.1"/>
    <property type="molecule type" value="mRNA"/>
</dbReference>
<dbReference type="RefSeq" id="NP_199255.1">
    <property type="nucleotide sequence ID" value="NM_123809.4"/>
</dbReference>
<dbReference type="SMR" id="Q9FI23"/>
<dbReference type="BioGRID" id="19719">
    <property type="interactions" value="3"/>
</dbReference>
<dbReference type="FunCoup" id="Q9FI23">
    <property type="interactions" value="137"/>
</dbReference>
<dbReference type="IntAct" id="Q9FI23">
    <property type="interactions" value="3"/>
</dbReference>
<dbReference type="STRING" id="3702.Q9FI23"/>
<dbReference type="PaxDb" id="3702-AT5G44420.1"/>
<dbReference type="EnsemblPlants" id="AT5G44420.1">
    <property type="protein sequence ID" value="AT5G44420.1"/>
    <property type="gene ID" value="AT5G44420"/>
</dbReference>
<dbReference type="GeneID" id="834469"/>
<dbReference type="Gramene" id="AT5G44420.1">
    <property type="protein sequence ID" value="AT5G44420.1"/>
    <property type="gene ID" value="AT5G44420"/>
</dbReference>
<dbReference type="KEGG" id="ath:AT5G44420"/>
<dbReference type="Araport" id="AT5G44420"/>
<dbReference type="TAIR" id="AT5G44420">
    <property type="gene designation" value="PDF1.2"/>
</dbReference>
<dbReference type="eggNOG" id="ENOG502SQS4">
    <property type="taxonomic scope" value="Eukaryota"/>
</dbReference>
<dbReference type="HOGENOM" id="CLU_161668_3_0_1"/>
<dbReference type="InParanoid" id="Q9FI23"/>
<dbReference type="OMA" id="GNNGACK"/>
<dbReference type="OrthoDB" id="1089244at2759"/>
<dbReference type="PhylomeDB" id="Q9FI23"/>
<dbReference type="PRO" id="PR:Q9FI23"/>
<dbReference type="Proteomes" id="UP000006548">
    <property type="component" value="Chromosome 5"/>
</dbReference>
<dbReference type="ExpressionAtlas" id="Q9FI23">
    <property type="expression patterns" value="baseline and differential"/>
</dbReference>
<dbReference type="GO" id="GO:0005576">
    <property type="term" value="C:extracellular region"/>
    <property type="evidence" value="ECO:0007669"/>
    <property type="project" value="UniProtKB-SubCell"/>
</dbReference>
<dbReference type="GO" id="GO:0006952">
    <property type="term" value="P:defense response"/>
    <property type="evidence" value="ECO:0000304"/>
    <property type="project" value="TAIR"/>
</dbReference>
<dbReference type="GO" id="GO:0050832">
    <property type="term" value="P:defense response to fungus"/>
    <property type="evidence" value="ECO:0007669"/>
    <property type="project" value="UniProtKB-KW"/>
</dbReference>
<dbReference type="GO" id="GO:0009861">
    <property type="term" value="P:jasmonic acid and ethylene-dependent systemic resistance"/>
    <property type="evidence" value="ECO:0000304"/>
    <property type="project" value="TAIR"/>
</dbReference>
<dbReference type="GO" id="GO:0031640">
    <property type="term" value="P:killing of cells of another organism"/>
    <property type="evidence" value="ECO:0007669"/>
    <property type="project" value="UniProtKB-KW"/>
</dbReference>
<dbReference type="GO" id="GO:0009723">
    <property type="term" value="P:response to ethylene"/>
    <property type="evidence" value="ECO:0000270"/>
    <property type="project" value="TAIR"/>
</dbReference>
<dbReference type="GO" id="GO:0009625">
    <property type="term" value="P:response to insect"/>
    <property type="evidence" value="ECO:0000270"/>
    <property type="project" value="TAIR"/>
</dbReference>
<dbReference type="GO" id="GO:0009753">
    <property type="term" value="P:response to jasmonic acid"/>
    <property type="evidence" value="ECO:0000270"/>
    <property type="project" value="TAIR"/>
</dbReference>
<dbReference type="CDD" id="cd00107">
    <property type="entry name" value="Knot1"/>
    <property type="match status" value="1"/>
</dbReference>
<dbReference type="FunFam" id="3.30.30.10:FF:000003">
    <property type="entry name" value="Defensin-like protein 1"/>
    <property type="match status" value="1"/>
</dbReference>
<dbReference type="Gene3D" id="3.30.30.10">
    <property type="entry name" value="Knottin, scorpion toxin-like"/>
    <property type="match status" value="1"/>
</dbReference>
<dbReference type="InterPro" id="IPR008176">
    <property type="entry name" value="Defensin_plant"/>
</dbReference>
<dbReference type="InterPro" id="IPR003614">
    <property type="entry name" value="Scorpion_toxin-like"/>
</dbReference>
<dbReference type="InterPro" id="IPR036574">
    <property type="entry name" value="Scorpion_toxin-like_sf"/>
</dbReference>
<dbReference type="PANTHER" id="PTHR33147">
    <property type="entry name" value="DEFENSIN-LIKE PROTEIN 1"/>
    <property type="match status" value="1"/>
</dbReference>
<dbReference type="PANTHER" id="PTHR33147:SF37">
    <property type="entry name" value="DEFENSIN-LIKE PROTEIN 14-RELATED"/>
    <property type="match status" value="1"/>
</dbReference>
<dbReference type="Pfam" id="PF00304">
    <property type="entry name" value="Gamma-thionin"/>
    <property type="match status" value="1"/>
</dbReference>
<dbReference type="SMART" id="SM00505">
    <property type="entry name" value="Knot1"/>
    <property type="match status" value="1"/>
</dbReference>
<dbReference type="SUPFAM" id="SSF57095">
    <property type="entry name" value="Scorpion toxin-like"/>
    <property type="match status" value="1"/>
</dbReference>
<dbReference type="PROSITE" id="PS00940">
    <property type="entry name" value="GAMMA_THIONIN"/>
    <property type="match status" value="1"/>
</dbReference>
<comment type="function">
    <text evidence="5">Confers broad-spectrum resistance to pathogens. Has antifungal activity in vitro.</text>
</comment>
<comment type="interaction">
    <interactant intactId="EBI-25516740">
        <id>Q9FI23</id>
    </interactant>
    <interactant intactId="EBI-4424796">
        <id>Q94BX2</id>
        <label>At3g50910</label>
    </interactant>
    <organismsDiffer>false</organismsDiffer>
    <experiments>3</experiments>
</comment>
<comment type="interaction">
    <interactant intactId="EBI-25516740">
        <id>Q9FI23</id>
    </interactant>
    <interactant intactId="EBI-15191931">
        <id>Q9M126</id>
        <label>NAC69</label>
    </interactant>
    <organismsDiffer>false</organismsDiffer>
    <experiments>3</experiments>
</comment>
<comment type="interaction">
    <interactant intactId="EBI-25516740">
        <id>Q9FI23</id>
    </interactant>
    <interactant intactId="EBI-4426607">
        <id>F4JN35</id>
        <label>NTL9</label>
    </interactant>
    <organismsDiffer>false</organismsDiffer>
    <experiments>3</experiments>
</comment>
<comment type="subcellular location">
    <subcellularLocation>
        <location evidence="1">Secreted</location>
    </subcellularLocation>
</comment>
<comment type="tissue specificity">
    <text evidence="5 6">Predominantly expressed in leaves.</text>
</comment>
<comment type="induction">
    <text evidence="4 5 7">By pathogens, methyl jasmonate and ethylene. Up-regulated by ORA59/ERF094.</text>
</comment>
<comment type="similarity">
    <text evidence="8">Belongs to the DEFL family.</text>
</comment>
<gene>
    <name type="primary">PDF1.2A</name>
    <name type="synonym">LCR77</name>
    <name type="synonym">PDF1.2</name>
    <name type="ordered locus">At5g44420</name>
    <name type="ORF">MFC16.8</name>
</gene>